<accession>O88998</accession>
<accession>A3KGE5</accession>
<accession>O35429</accession>
<accession>O88999</accession>
<accession>Q91XK8</accession>
<accession>Q9QWQ9</accession>
<accession>Q9QWR0</accession>
<comment type="function">
    <text evidence="2 8 10">Contributes to the regulation of axonal growth in the embryonic and adult central nervous system by inhibiting interactions between RTN4R and LINGO1. Inhibits RTN4R-mediated axon growth cone collapse (PubMed:22923615). May play an important role in regulating the production of neural crest cells by the neural tube (By similarity). May be required for normal responses to olfactory stimuli (PubMed:26107991).</text>
</comment>
<comment type="subunit">
    <text evidence="1 5 7 8 9">Homotetramer; disulfide-linked. Dimer of dimers, giving rise to a V-shaped homotretramer (PubMed:25903135). Isoform 1 and isoform 3 interact with RTN4R (PubMed:22923615). Identified in a complex with RTN4R and LINGO1 (PubMed:22923615). Peripherally associated with AMPAR complex. AMPAR complex consists of an inner core made of 4 pore-forming GluA/GRIA proteins (GRIA1, GRIA2, GRIA3 and GRIA4) and 4 major auxiliary subunits arranged in a twofold symmetry. One of the two pairs of distinct binding sites is occupied either by CNIH2, CNIH3 or CACNG2, CACNG3. The other harbors CACNG2, CACNG3, CACNG4, CACNG8 or GSG1L. This inner core of AMPAR complex is complemented by outer core constituents binding directly to the GluA/GRIA proteins at sites distinct from the interaction sites of the inner core constituents. Outer core constituents include at least PRRT1, PRRT2, CKAMP44/SHISA9, FRRS1L and NRN1. The proteins of the inner and outer core serve as a platform for other, more peripherally associated AMPAR constituents, including OLFM1. Alone or in combination, these auxiliary subunits control the gating and pharmacology of the AMPAR complex and profoundly impact their biogenesis and protein processing (PubMed:22632720). Interacts with OLFM2 (By similarity). Interacts with DTNB (PubMed:17265465).</text>
</comment>
<comment type="subcellular location">
    <subcellularLocation>
        <location evidence="8 17">Secreted</location>
    </subcellularLocation>
    <subcellularLocation>
        <location evidence="17">Synapse</location>
    </subcellularLocation>
    <subcellularLocation>
        <location evidence="8">Endoplasmic reticulum</location>
    </subcellularLocation>
    <subcellularLocation>
        <location evidence="8 10">Cell projection</location>
        <location evidence="8 10">Axon</location>
    </subcellularLocation>
    <subcellularLocation>
        <location evidence="8">Perikaryon</location>
    </subcellularLocation>
</comment>
<comment type="subcellular location">
    <molecule>Isoform 1</molecule>
    <subcellularLocation>
        <location evidence="11 18">Endoplasmic reticulum</location>
    </subcellularLocation>
</comment>
<comment type="alternative products">
    <event type="alternative splicing"/>
    <isoform>
        <id>O88998-1</id>
        <name>1</name>
        <name evidence="16">BMZ.</name>
        <sequence type="displayed"/>
    </isoform>
    <isoform>
        <id>O88998-2</id>
        <name>2</name>
        <name evidence="16">BMY.</name>
        <sequence type="described" ref="VSP_003763 VSP_003764"/>
    </isoform>
    <isoform>
        <id>O88998-3</id>
        <name>3</name>
        <name evidence="16">AMZ</name>
        <sequence type="described" ref="VSP_003762"/>
    </isoform>
    <isoform>
        <id>O88998-4</id>
        <name>4</name>
        <name evidence="16">AMY</name>
        <sequence type="described" ref="VSP_003762 VSP_003763 VSP_003764"/>
    </isoform>
</comment>
<comment type="tissue specificity">
    <text evidence="7 8 10 11">Expressed in the brain cortex, olfactory bulb and vomeronasal neuroepithelium (at protein level) (PubMed:22632720, PubMed:22923615, PubMed:26107991, PubMed:9473566). Detected in brain cortex, hippocampus, dorsal root ganglion and olfactory bulb (PubMed:22923615, PubMed:9473566).</text>
</comment>
<comment type="developmental stage">
    <text evidence="6 10">Expression increases moderately during embryonic development and remains stable in the postnatal brain (PubMed:21228389). Highly expressed in uterus luminal epithelium after embryo implantation (PubMed:26107991).</text>
</comment>
<comment type="domain">
    <text evidence="9">The protein contains a globular N-terminal tetramerization domain, a long stalk formed by the coiled coil region and a C-terminal olfactomedin-like domain. Interactions between dimers are mediated by the coiled coil region. The dimers interact mostly via the N-terminal tetramerization domain, giving rise to a V-shaped overall architecture of the tetramer.</text>
</comment>
<comment type="disruption phenotype">
    <text evidence="9">Females have slightly lower body weight than wild-type at birth, but strongly reduced body weight one to eight weeks after birth. Mutant females do not display normal estrus cycle responses to male odor, and have very low fertility due to a strongly decreased rate of ovulation and a low mating rate.</text>
</comment>
<comment type="miscellaneous">
    <text evidence="9">The protein structure is stabilized by calcium ions.</text>
</comment>
<sequence length="485" mass="55398">MSVPLLKIGVVLSTMAMITNWMSQTLPSLVGLNTTRLSAASGGTLDRSTGVLPTNPEESWQVYSSAQDSEGRCICTVVAPQQTMCSRDARTKQLRQLLEKVQNMSQSIEVLDRRTQRDLQYVEKMENQMKGLETKFKQVEESHKQHLARQFKAIKAKMDELRPLIPVLEEYKADAKLVLQFKEEVQNLTSVLNELQEEIGAYDYDELQSRVSNLEERLRACMQKLACGKLTGISDPVTVKTSGSRFGSWMTDPLAPEGDNRVWYMDGYHNNRFVREYKSMVDFMNTDNFTSHRLPHPWSGTGQVVYNGSIYFNKFQSHIIIRFDLKTEAILKTRSLDYAGYNNMYHYAWGGHSDIDLMVDENGLWAVYATNQNAGNIVISKLDPVSLQILQTWNTSYPKRSAGEAFIICGTLYVTNGYSGGTKVHYAYQTNASTYEYIDIPFQNKYSHISMLDYNPKDRALYAWNNGHQTLYNVTLFHVIRSDEL</sequence>
<reference key="1">
    <citation type="journal article" date="1998" name="Brain Res. Mol. Brain Res.">
        <title>Differentially expressed olfactomedin-related glycoproteins (Pancortins) in the brain.</title>
        <authorList>
            <person name="Nagano T."/>
            <person name="Nakamura A."/>
            <person name="Mori Y."/>
            <person name="Maeda M."/>
            <person name="Takami T."/>
            <person name="Shiosaka S."/>
            <person name="Takagi H."/>
            <person name="Sato M."/>
        </authorList>
    </citation>
    <scope>NUCLEOTIDE SEQUENCE [MRNA]</scope>
    <scope>ALTERNATIVE SPLICING</scope>
    <scope>TISSUE SPECIFICITY</scope>
    <scope>SUBCELLULAR LOCATION</scope>
    <source>
        <strain>ICR</strain>
        <tissue>Brain</tissue>
    </source>
</reference>
<reference key="2">
    <citation type="submission" date="1997-10" db="EMBL/GenBank/DDBJ databases">
        <authorList>
            <person name="Anholt R."/>
            <person name="Kulkarni N."/>
            <person name="Karavanich C."/>
        </authorList>
    </citation>
    <scope>NUCLEOTIDE SEQUENCE [MRNA] (ISOFORM 3)</scope>
</reference>
<reference key="3">
    <citation type="journal article" date="2005" name="Science">
        <title>The transcriptional landscape of the mammalian genome.</title>
        <authorList>
            <person name="Carninci P."/>
            <person name="Kasukawa T."/>
            <person name="Katayama S."/>
            <person name="Gough J."/>
            <person name="Frith M.C."/>
            <person name="Maeda N."/>
            <person name="Oyama R."/>
            <person name="Ravasi T."/>
            <person name="Lenhard B."/>
            <person name="Wells C."/>
            <person name="Kodzius R."/>
            <person name="Shimokawa K."/>
            <person name="Bajic V.B."/>
            <person name="Brenner S.E."/>
            <person name="Batalov S."/>
            <person name="Forrest A.R."/>
            <person name="Zavolan M."/>
            <person name="Davis M.J."/>
            <person name="Wilming L.G."/>
            <person name="Aidinis V."/>
            <person name="Allen J.E."/>
            <person name="Ambesi-Impiombato A."/>
            <person name="Apweiler R."/>
            <person name="Aturaliya R.N."/>
            <person name="Bailey T.L."/>
            <person name="Bansal M."/>
            <person name="Baxter L."/>
            <person name="Beisel K.W."/>
            <person name="Bersano T."/>
            <person name="Bono H."/>
            <person name="Chalk A.M."/>
            <person name="Chiu K.P."/>
            <person name="Choudhary V."/>
            <person name="Christoffels A."/>
            <person name="Clutterbuck D.R."/>
            <person name="Crowe M.L."/>
            <person name="Dalla E."/>
            <person name="Dalrymple B.P."/>
            <person name="de Bono B."/>
            <person name="Della Gatta G."/>
            <person name="di Bernardo D."/>
            <person name="Down T."/>
            <person name="Engstrom P."/>
            <person name="Fagiolini M."/>
            <person name="Faulkner G."/>
            <person name="Fletcher C.F."/>
            <person name="Fukushima T."/>
            <person name="Furuno M."/>
            <person name="Futaki S."/>
            <person name="Gariboldi M."/>
            <person name="Georgii-Hemming P."/>
            <person name="Gingeras T.R."/>
            <person name="Gojobori T."/>
            <person name="Green R.E."/>
            <person name="Gustincich S."/>
            <person name="Harbers M."/>
            <person name="Hayashi Y."/>
            <person name="Hensch T.K."/>
            <person name="Hirokawa N."/>
            <person name="Hill D."/>
            <person name="Huminiecki L."/>
            <person name="Iacono M."/>
            <person name="Ikeo K."/>
            <person name="Iwama A."/>
            <person name="Ishikawa T."/>
            <person name="Jakt M."/>
            <person name="Kanapin A."/>
            <person name="Katoh M."/>
            <person name="Kawasawa Y."/>
            <person name="Kelso J."/>
            <person name="Kitamura H."/>
            <person name="Kitano H."/>
            <person name="Kollias G."/>
            <person name="Krishnan S.P."/>
            <person name="Kruger A."/>
            <person name="Kummerfeld S.K."/>
            <person name="Kurochkin I.V."/>
            <person name="Lareau L.F."/>
            <person name="Lazarevic D."/>
            <person name="Lipovich L."/>
            <person name="Liu J."/>
            <person name="Liuni S."/>
            <person name="McWilliam S."/>
            <person name="Madan Babu M."/>
            <person name="Madera M."/>
            <person name="Marchionni L."/>
            <person name="Matsuda H."/>
            <person name="Matsuzawa S."/>
            <person name="Miki H."/>
            <person name="Mignone F."/>
            <person name="Miyake S."/>
            <person name="Morris K."/>
            <person name="Mottagui-Tabar S."/>
            <person name="Mulder N."/>
            <person name="Nakano N."/>
            <person name="Nakauchi H."/>
            <person name="Ng P."/>
            <person name="Nilsson R."/>
            <person name="Nishiguchi S."/>
            <person name="Nishikawa S."/>
            <person name="Nori F."/>
            <person name="Ohara O."/>
            <person name="Okazaki Y."/>
            <person name="Orlando V."/>
            <person name="Pang K.C."/>
            <person name="Pavan W.J."/>
            <person name="Pavesi G."/>
            <person name="Pesole G."/>
            <person name="Petrovsky N."/>
            <person name="Piazza S."/>
            <person name="Reed J."/>
            <person name="Reid J.F."/>
            <person name="Ring B.Z."/>
            <person name="Ringwald M."/>
            <person name="Rost B."/>
            <person name="Ruan Y."/>
            <person name="Salzberg S.L."/>
            <person name="Sandelin A."/>
            <person name="Schneider C."/>
            <person name="Schoenbach C."/>
            <person name="Sekiguchi K."/>
            <person name="Semple C.A."/>
            <person name="Seno S."/>
            <person name="Sessa L."/>
            <person name="Sheng Y."/>
            <person name="Shibata Y."/>
            <person name="Shimada H."/>
            <person name="Shimada K."/>
            <person name="Silva D."/>
            <person name="Sinclair B."/>
            <person name="Sperling S."/>
            <person name="Stupka E."/>
            <person name="Sugiura K."/>
            <person name="Sultana R."/>
            <person name="Takenaka Y."/>
            <person name="Taki K."/>
            <person name="Tammoja K."/>
            <person name="Tan S.L."/>
            <person name="Tang S."/>
            <person name="Taylor M.S."/>
            <person name="Tegner J."/>
            <person name="Teichmann S.A."/>
            <person name="Ueda H.R."/>
            <person name="van Nimwegen E."/>
            <person name="Verardo R."/>
            <person name="Wei C.L."/>
            <person name="Yagi K."/>
            <person name="Yamanishi H."/>
            <person name="Zabarovsky E."/>
            <person name="Zhu S."/>
            <person name="Zimmer A."/>
            <person name="Hide W."/>
            <person name="Bult C."/>
            <person name="Grimmond S.M."/>
            <person name="Teasdale R.D."/>
            <person name="Liu E.T."/>
            <person name="Brusic V."/>
            <person name="Quackenbush J."/>
            <person name="Wahlestedt C."/>
            <person name="Mattick J.S."/>
            <person name="Hume D.A."/>
            <person name="Kai C."/>
            <person name="Sasaki D."/>
            <person name="Tomaru Y."/>
            <person name="Fukuda S."/>
            <person name="Kanamori-Katayama M."/>
            <person name="Suzuki M."/>
            <person name="Aoki J."/>
            <person name="Arakawa T."/>
            <person name="Iida J."/>
            <person name="Imamura K."/>
            <person name="Itoh M."/>
            <person name="Kato T."/>
            <person name="Kawaji H."/>
            <person name="Kawagashira N."/>
            <person name="Kawashima T."/>
            <person name="Kojima M."/>
            <person name="Kondo S."/>
            <person name="Konno H."/>
            <person name="Nakano K."/>
            <person name="Ninomiya N."/>
            <person name="Nishio T."/>
            <person name="Okada M."/>
            <person name="Plessy C."/>
            <person name="Shibata K."/>
            <person name="Shiraki T."/>
            <person name="Suzuki S."/>
            <person name="Tagami M."/>
            <person name="Waki K."/>
            <person name="Watahiki A."/>
            <person name="Okamura-Oho Y."/>
            <person name="Suzuki H."/>
            <person name="Kawai J."/>
            <person name="Hayashizaki Y."/>
        </authorList>
    </citation>
    <scope>NUCLEOTIDE SEQUENCE [LARGE SCALE MRNA] (ISOFORM 4)</scope>
    <source>
        <strain>C57BL/6J</strain>
        <tissue>Brain</tissue>
    </source>
</reference>
<reference key="4">
    <citation type="journal article" date="2009" name="PLoS Biol.">
        <title>Lineage-specific biology revealed by a finished genome assembly of the mouse.</title>
        <authorList>
            <person name="Church D.M."/>
            <person name="Goodstadt L."/>
            <person name="Hillier L.W."/>
            <person name="Zody M.C."/>
            <person name="Goldstein S."/>
            <person name="She X."/>
            <person name="Bult C.J."/>
            <person name="Agarwala R."/>
            <person name="Cherry J.L."/>
            <person name="DiCuccio M."/>
            <person name="Hlavina W."/>
            <person name="Kapustin Y."/>
            <person name="Meric P."/>
            <person name="Maglott D."/>
            <person name="Birtle Z."/>
            <person name="Marques A.C."/>
            <person name="Graves T."/>
            <person name="Zhou S."/>
            <person name="Teague B."/>
            <person name="Potamousis K."/>
            <person name="Churas C."/>
            <person name="Place M."/>
            <person name="Herschleb J."/>
            <person name="Runnheim R."/>
            <person name="Forrest D."/>
            <person name="Amos-Landgraf J."/>
            <person name="Schwartz D.C."/>
            <person name="Cheng Z."/>
            <person name="Lindblad-Toh K."/>
            <person name="Eichler E.E."/>
            <person name="Ponting C.P."/>
        </authorList>
    </citation>
    <scope>NUCLEOTIDE SEQUENCE [LARGE SCALE GENOMIC DNA]</scope>
    <source>
        <strain>C57BL/6J</strain>
    </source>
</reference>
<reference key="5">
    <citation type="journal article" date="2007" name="J. Neurosci. Res.">
        <title>beta-dystrobrevin, a kinesin-binding receptor, interacts with the extracellular matrix components pancortins.</title>
        <authorList>
            <person name="Veroni C."/>
            <person name="Grasso M."/>
            <person name="Macchia G."/>
            <person name="Ramoni C."/>
            <person name="Ceccarini M."/>
            <person name="Petrucci T.C."/>
            <person name="Macioce P."/>
        </authorList>
    </citation>
    <scope>INTERACTION WITH DTNB</scope>
</reference>
<reference key="6">
    <citation type="journal article" date="2011" name="Invest. Ophthalmol. Vis. Sci.">
        <title>Olfactomedin 2: expression in the eye and interaction with other olfactomedin domain-containing proteins.</title>
        <authorList>
            <person name="Sultana A."/>
            <person name="Nakaya N."/>
            <person name="Senatorov V.V."/>
            <person name="Tomarev S.I."/>
        </authorList>
    </citation>
    <scope>DEVELOPMENTAL STAGE</scope>
</reference>
<reference key="7">
    <citation type="journal article" date="2012" name="J. Biol. Chem.">
        <title>Olfactomedin 1 interacts with the Nogo A receptor complex to regulate axon growth.</title>
        <authorList>
            <person name="Nakaya N."/>
            <person name="Sultana A."/>
            <person name="Lee H.S."/>
            <person name="Tomarev S.I."/>
        </authorList>
    </citation>
    <scope>FUNCTION</scope>
    <scope>INTERACTION WITH RTN4R</scope>
    <scope>IDENTIFICATION IN A COMPLEX WITH RTN4R AND LINGO1</scope>
    <scope>SUBCELLULAR LOCATION</scope>
</reference>
<reference key="8">
    <citation type="journal article" date="2012" name="Neuron">
        <title>High-resolution proteomics unravel architecture and molecular diversity of native AMPA receptor complexes.</title>
        <authorList>
            <person name="Schwenk J."/>
            <person name="Harmel N."/>
            <person name="Brechet A."/>
            <person name="Zolles G."/>
            <person name="Berkefeld H."/>
            <person name="Muller C.S."/>
            <person name="Bildl W."/>
            <person name="Baehrens D."/>
            <person name="Huber B."/>
            <person name="Kulik A."/>
            <person name="Klocker N."/>
            <person name="Schulte U."/>
            <person name="Fakler B."/>
        </authorList>
    </citation>
    <scope>IDENTIFICATION IN AMPAR COMPLEX</scope>
    <scope>SUBCELLULAR LOCATION</scope>
    <scope>TISSUE SPECIFICITY</scope>
</reference>
<reference key="9">
    <citation type="journal article" date="2015" name="Endocrinology">
        <title>Olfactomedin 1 deficiency leads to defective olfaction and impaired female fertility.</title>
        <authorList>
            <person name="Li R."/>
            <person name="Diao H."/>
            <person name="Zhao F."/>
            <person name="Xiao S."/>
            <person name="Zowalaty A.E."/>
            <person name="Dudley E.A."/>
            <person name="Mattson M.P."/>
            <person name="Ye X."/>
        </authorList>
    </citation>
    <scope>DISRUPTION PHENOTYPE</scope>
    <scope>FUNCTION</scope>
    <scope>DEVELOPMENTAL STAGE</scope>
    <scope>TISSUE SPECIFICITY</scope>
    <scope>SUBCELLULAR LOCATION</scope>
</reference>
<reference key="10">
    <citation type="journal article" date="2015" name="J. Biol. Chem.">
        <title>Olfactomedin-1 has a v-shaped disulfide-linked tetrameric Structure.</title>
        <authorList>
            <person name="Pronker M.F."/>
            <person name="Bos T.G."/>
            <person name="Sharp T.H."/>
            <person name="Thies-Weesie D.M."/>
            <person name="Janssen B.J."/>
        </authorList>
    </citation>
    <scope>X-RAY CRYSTALLOGRAPHY (2.40 ANGSTROMS) OF 211-478</scope>
    <scope>STRUCTURE BY ELECTRON MICROSCOPY</scope>
    <scope>COILED COIL</scope>
    <scope>DOMAIN</scope>
    <scope>SUBUNIT</scope>
    <scope>DISULFIDE BONDS</scope>
    <scope>GLYCOSYLATION AT ASN-307; ASN-394 AND ASN-473</scope>
    <scope>SUBCELLULAR LOCATION</scope>
    <scope>MUTAGENESIS OF 479-VAL--LEU-485</scope>
</reference>
<dbReference type="EMBL" id="D78262">
    <property type="protein sequence ID" value="BAA28765.1"/>
    <property type="molecule type" value="mRNA"/>
</dbReference>
<dbReference type="EMBL" id="D78263">
    <property type="protein sequence ID" value="BAA28766.1"/>
    <property type="molecule type" value="mRNA"/>
</dbReference>
<dbReference type="EMBL" id="D78264">
    <property type="protein sequence ID" value="BAA28767.1"/>
    <property type="molecule type" value="mRNA"/>
</dbReference>
<dbReference type="EMBL" id="D78265">
    <property type="protein sequence ID" value="BAA28764.1"/>
    <property type="molecule type" value="mRNA"/>
</dbReference>
<dbReference type="EMBL" id="AF028740">
    <property type="protein sequence ID" value="AAB84058.1"/>
    <property type="molecule type" value="mRNA"/>
</dbReference>
<dbReference type="EMBL" id="AK003031">
    <property type="protein sequence ID" value="BAB22520.1"/>
    <property type="molecule type" value="mRNA"/>
</dbReference>
<dbReference type="EMBL" id="AL731778">
    <property type="status" value="NOT_ANNOTATED_CDS"/>
    <property type="molecule type" value="Genomic_DNA"/>
</dbReference>
<dbReference type="CCDS" id="CCDS15833.1">
    <molecule id="O88998-3"/>
</dbReference>
<dbReference type="CCDS" id="CCDS15834.1">
    <molecule id="O88998-1"/>
</dbReference>
<dbReference type="CCDS" id="CCDS15835.1">
    <molecule id="O88998-2"/>
</dbReference>
<dbReference type="RefSeq" id="NP_001033701.1">
    <molecule id="O88998-2"/>
    <property type="nucleotide sequence ID" value="NM_001038612.1"/>
</dbReference>
<dbReference type="RefSeq" id="NP_001033703.1">
    <molecule id="O88998-4"/>
    <property type="nucleotide sequence ID" value="NM_001038614.1"/>
</dbReference>
<dbReference type="PDB" id="5AMO">
    <property type="method" value="X-ray"/>
    <property type="resolution" value="2.40 A"/>
    <property type="chains" value="A/B=17-478"/>
</dbReference>
<dbReference type="PDB" id="6QM3">
    <property type="method" value="X-ray"/>
    <property type="resolution" value="2.00 A"/>
    <property type="chains" value="A/B=212-477"/>
</dbReference>
<dbReference type="PDBsum" id="5AMO"/>
<dbReference type="PDBsum" id="6QM3"/>
<dbReference type="SASBDB" id="O88998"/>
<dbReference type="SMR" id="O88998"/>
<dbReference type="BioGRID" id="207823">
    <property type="interactions" value="41"/>
</dbReference>
<dbReference type="CORUM" id="O88998"/>
<dbReference type="FunCoup" id="O88998">
    <property type="interactions" value="534"/>
</dbReference>
<dbReference type="IntAct" id="O88998">
    <property type="interactions" value="1"/>
</dbReference>
<dbReference type="MINT" id="O88998"/>
<dbReference type="STRING" id="10090.ENSMUSP00000028177"/>
<dbReference type="GlyConnect" id="2565">
    <property type="glycosylation" value="12 N-Linked glycans (5 sites)"/>
</dbReference>
<dbReference type="GlyCosmos" id="O88998">
    <property type="glycosylation" value="8 sites, 12 glycans"/>
</dbReference>
<dbReference type="GlyGen" id="O88998">
    <property type="glycosylation" value="9 sites, 16 N-linked glycans (6 sites), 1 O-linked glycan (1 site)"/>
</dbReference>
<dbReference type="iPTMnet" id="O88998"/>
<dbReference type="PhosphoSitePlus" id="O88998"/>
<dbReference type="SwissPalm" id="O88998"/>
<dbReference type="CPTAC" id="non-CPTAC-3596"/>
<dbReference type="PaxDb" id="10090-ENSMUSP00000028177"/>
<dbReference type="PeptideAtlas" id="O88998"/>
<dbReference type="ProteomicsDB" id="293670">
    <molecule id="O88998-1"/>
</dbReference>
<dbReference type="ProteomicsDB" id="293671">
    <molecule id="O88998-2"/>
</dbReference>
<dbReference type="ProteomicsDB" id="293672">
    <molecule id="O88998-3"/>
</dbReference>
<dbReference type="ProteomicsDB" id="293673">
    <molecule id="O88998-4"/>
</dbReference>
<dbReference type="ABCD" id="O88998">
    <property type="antibodies" value="1 sequenced antibody"/>
</dbReference>
<dbReference type="Antibodypedia" id="32030">
    <property type="antibodies" value="402 antibodies from 38 providers"/>
</dbReference>
<dbReference type="Ensembl" id="ENSMUST00000102879.4">
    <molecule id="O88998-2"/>
    <property type="protein sequence ID" value="ENSMUSP00000099943.4"/>
    <property type="gene ID" value="ENSMUSG00000026833.19"/>
</dbReference>
<dbReference type="GeneID" id="56177"/>
<dbReference type="KEGG" id="mmu:56177"/>
<dbReference type="UCSC" id="uc008iya.1">
    <molecule id="O88998-4"/>
    <property type="organism name" value="mouse"/>
</dbReference>
<dbReference type="UCSC" id="uc008iyc.1">
    <molecule id="O88998-2"/>
    <property type="organism name" value="mouse"/>
</dbReference>
<dbReference type="AGR" id="MGI:1860437"/>
<dbReference type="CTD" id="10439"/>
<dbReference type="MGI" id="MGI:1860437">
    <property type="gene designation" value="Olfm1"/>
</dbReference>
<dbReference type="VEuPathDB" id="HostDB:ENSMUSG00000026833"/>
<dbReference type="eggNOG" id="KOG3545">
    <property type="taxonomic scope" value="Eukaryota"/>
</dbReference>
<dbReference type="GeneTree" id="ENSGT00940000156959"/>
<dbReference type="HOGENOM" id="CLU_1712669_0_0_1"/>
<dbReference type="InParanoid" id="O88998"/>
<dbReference type="OrthoDB" id="8626508at2759"/>
<dbReference type="PhylomeDB" id="O88998"/>
<dbReference type="BioGRID-ORCS" id="56177">
    <property type="hits" value="0 hits in 77 CRISPR screens"/>
</dbReference>
<dbReference type="CD-CODE" id="CE726F99">
    <property type="entry name" value="Postsynaptic density"/>
</dbReference>
<dbReference type="ChiTaRS" id="Olfm1">
    <property type="organism name" value="mouse"/>
</dbReference>
<dbReference type="EvolutionaryTrace" id="O88998"/>
<dbReference type="PRO" id="PR:O88998"/>
<dbReference type="Proteomes" id="UP000000589">
    <property type="component" value="Chromosome 2"/>
</dbReference>
<dbReference type="RNAct" id="O88998">
    <property type="molecule type" value="protein"/>
</dbReference>
<dbReference type="Bgee" id="ENSMUSG00000026833">
    <property type="expression patterns" value="Expressed in dentate gyrus of hippocampal formation granule cell and 287 other cell types or tissues"/>
</dbReference>
<dbReference type="ExpressionAtlas" id="O88998">
    <property type="expression patterns" value="baseline and differential"/>
</dbReference>
<dbReference type="GO" id="GO:0032281">
    <property type="term" value="C:AMPA glutamate receptor complex"/>
    <property type="evidence" value="ECO:0000314"/>
    <property type="project" value="MGI"/>
</dbReference>
<dbReference type="GO" id="GO:0030424">
    <property type="term" value="C:axon"/>
    <property type="evidence" value="ECO:0000314"/>
    <property type="project" value="UniProtKB"/>
</dbReference>
<dbReference type="GO" id="GO:0044295">
    <property type="term" value="C:axonal growth cone"/>
    <property type="evidence" value="ECO:0000314"/>
    <property type="project" value="UniProtKB"/>
</dbReference>
<dbReference type="GO" id="GO:0005783">
    <property type="term" value="C:endoplasmic reticulum"/>
    <property type="evidence" value="ECO:0000314"/>
    <property type="project" value="UniProtKB"/>
</dbReference>
<dbReference type="GO" id="GO:0005615">
    <property type="term" value="C:extracellular space"/>
    <property type="evidence" value="ECO:0000314"/>
    <property type="project" value="MGI"/>
</dbReference>
<dbReference type="GO" id="GO:0099147">
    <property type="term" value="C:extrinsic component of postsynaptic density membrane"/>
    <property type="evidence" value="ECO:0000314"/>
    <property type="project" value="SynGO"/>
</dbReference>
<dbReference type="GO" id="GO:0099243">
    <property type="term" value="C:extrinsic component of synaptic membrane"/>
    <property type="evidence" value="ECO:0000314"/>
    <property type="project" value="SynGO"/>
</dbReference>
<dbReference type="GO" id="GO:0098978">
    <property type="term" value="C:glutamatergic synapse"/>
    <property type="evidence" value="ECO:0000314"/>
    <property type="project" value="SynGO"/>
</dbReference>
<dbReference type="GO" id="GO:0043025">
    <property type="term" value="C:neuronal cell body"/>
    <property type="evidence" value="ECO:0000314"/>
    <property type="project" value="UniProtKB"/>
</dbReference>
<dbReference type="GO" id="GO:0043204">
    <property type="term" value="C:perikaryon"/>
    <property type="evidence" value="ECO:0007669"/>
    <property type="project" value="UniProtKB-SubCell"/>
</dbReference>
<dbReference type="GO" id="GO:0097060">
    <property type="term" value="C:synaptic membrane"/>
    <property type="evidence" value="ECO:0000314"/>
    <property type="project" value="MGI"/>
</dbReference>
<dbReference type="GO" id="GO:0001540">
    <property type="term" value="F:amyloid-beta binding"/>
    <property type="evidence" value="ECO:0000314"/>
    <property type="project" value="MGI"/>
</dbReference>
<dbReference type="GO" id="GO:0042802">
    <property type="term" value="F:identical protein binding"/>
    <property type="evidence" value="ECO:0000353"/>
    <property type="project" value="MGI"/>
</dbReference>
<dbReference type="GO" id="GO:0003190">
    <property type="term" value="P:atrioventricular valve formation"/>
    <property type="evidence" value="ECO:0000250"/>
    <property type="project" value="AgBase"/>
</dbReference>
<dbReference type="GO" id="GO:0060317">
    <property type="term" value="P:cardiac epithelial to mesenchymal transition"/>
    <property type="evidence" value="ECO:0000250"/>
    <property type="project" value="AgBase"/>
</dbReference>
<dbReference type="GO" id="GO:1902430">
    <property type="term" value="P:negative regulation of amyloid-beta formation"/>
    <property type="evidence" value="ECO:0000314"/>
    <property type="project" value="MGI"/>
</dbReference>
<dbReference type="GO" id="GO:0010629">
    <property type="term" value="P:negative regulation of gene expression"/>
    <property type="evidence" value="ECO:0000250"/>
    <property type="project" value="AgBase"/>
</dbReference>
<dbReference type="GO" id="GO:0023041">
    <property type="term" value="P:neuronal signal transduction"/>
    <property type="evidence" value="ECO:0000314"/>
    <property type="project" value="UniProtKB"/>
</dbReference>
<dbReference type="GO" id="GO:0043065">
    <property type="term" value="P:positive regulation of apoptotic process"/>
    <property type="evidence" value="ECO:0000250"/>
    <property type="project" value="UniProtKB"/>
</dbReference>
<dbReference type="GO" id="GO:0010718">
    <property type="term" value="P:positive regulation of epithelial to mesenchymal transition"/>
    <property type="evidence" value="ECO:0000250"/>
    <property type="project" value="AgBase"/>
</dbReference>
<dbReference type="GO" id="GO:0010628">
    <property type="term" value="P:positive regulation of gene expression"/>
    <property type="evidence" value="ECO:0000250"/>
    <property type="project" value="AgBase"/>
</dbReference>
<dbReference type="GO" id="GO:1902003">
    <property type="term" value="P:regulation of amyloid-beta formation"/>
    <property type="evidence" value="ECO:0000314"/>
    <property type="project" value="MGI"/>
</dbReference>
<dbReference type="GO" id="GO:0030516">
    <property type="term" value="P:regulation of axon extension"/>
    <property type="evidence" value="ECO:0000314"/>
    <property type="project" value="UniProtKB"/>
</dbReference>
<dbReference type="DisProt" id="DP00936"/>
<dbReference type="InterPro" id="IPR022082">
    <property type="entry name" value="Noelin_dom"/>
</dbReference>
<dbReference type="InterPro" id="IPR003112">
    <property type="entry name" value="Olfac-like_dom"/>
</dbReference>
<dbReference type="InterPro" id="IPR050605">
    <property type="entry name" value="Olfactomedin-like_domain"/>
</dbReference>
<dbReference type="InterPro" id="IPR011044">
    <property type="entry name" value="Quino_amine_DH_bsu"/>
</dbReference>
<dbReference type="PANTHER" id="PTHR23192:SF34">
    <property type="entry name" value="NOELIN"/>
    <property type="match status" value="1"/>
</dbReference>
<dbReference type="PANTHER" id="PTHR23192">
    <property type="entry name" value="OLFACTOMEDIN-RELATED"/>
    <property type="match status" value="1"/>
</dbReference>
<dbReference type="Pfam" id="PF12308">
    <property type="entry name" value="Noelin-1"/>
    <property type="match status" value="1"/>
</dbReference>
<dbReference type="Pfam" id="PF02191">
    <property type="entry name" value="OLF"/>
    <property type="match status" value="1"/>
</dbReference>
<dbReference type="SMART" id="SM00284">
    <property type="entry name" value="OLF"/>
    <property type="match status" value="1"/>
</dbReference>
<dbReference type="SUPFAM" id="SSF50969">
    <property type="entry name" value="YVTN repeat-like/Quinoprotein amine dehydrogenase"/>
    <property type="match status" value="1"/>
</dbReference>
<dbReference type="PROSITE" id="PS00014">
    <property type="entry name" value="ER_TARGET"/>
    <property type="match status" value="1"/>
</dbReference>
<dbReference type="PROSITE" id="PS51132">
    <property type="entry name" value="OLF"/>
    <property type="match status" value="1"/>
</dbReference>
<keyword id="KW-0002">3D-structure</keyword>
<keyword id="KW-0025">Alternative splicing</keyword>
<keyword id="KW-0966">Cell projection</keyword>
<keyword id="KW-0175">Coiled coil</keyword>
<keyword id="KW-0217">Developmental protein</keyword>
<keyword id="KW-1015">Disulfide bond</keyword>
<keyword id="KW-0256">Endoplasmic reticulum</keyword>
<keyword id="KW-0325">Glycoprotein</keyword>
<keyword id="KW-1185">Reference proteome</keyword>
<keyword id="KW-0964">Secreted</keyword>
<keyword id="KW-0732">Signal</keyword>
<keyword id="KW-0770">Synapse</keyword>
<name>NOE1_MOUSE</name>
<gene>
    <name type="primary">Olfm1</name>
    <name type="synonym">Noe1</name>
    <name type="synonym">Noel</name>
    <name type="synonym">Noel1</name>
</gene>
<proteinExistence type="evidence at protein level"/>
<evidence type="ECO:0000250" key="1">
    <source>
        <dbReference type="UniProtKB" id="Q99784"/>
    </source>
</evidence>
<evidence type="ECO:0000250" key="2">
    <source>
        <dbReference type="UniProtKB" id="Q9IAK4"/>
    </source>
</evidence>
<evidence type="ECO:0000255" key="3"/>
<evidence type="ECO:0000255" key="4">
    <source>
        <dbReference type="PROSITE-ProRule" id="PRU00446"/>
    </source>
</evidence>
<evidence type="ECO:0000269" key="5">
    <source>
    </source>
</evidence>
<evidence type="ECO:0000269" key="6">
    <source>
    </source>
</evidence>
<evidence type="ECO:0000269" key="7">
    <source>
    </source>
</evidence>
<evidence type="ECO:0000269" key="8">
    <source>
    </source>
</evidence>
<evidence type="ECO:0000269" key="9">
    <source>
    </source>
</evidence>
<evidence type="ECO:0000269" key="10">
    <source>
    </source>
</evidence>
<evidence type="ECO:0000269" key="11">
    <source>
    </source>
</evidence>
<evidence type="ECO:0000303" key="12">
    <source>
    </source>
</evidence>
<evidence type="ECO:0000303" key="13">
    <source>
    </source>
</evidence>
<evidence type="ECO:0000303" key="14">
    <source>
    </source>
</evidence>
<evidence type="ECO:0000303" key="15">
    <source ref="2"/>
</evidence>
<evidence type="ECO:0000305" key="16"/>
<evidence type="ECO:0000305" key="17">
    <source>
    </source>
</evidence>
<evidence type="ECO:0000305" key="18">
    <source>
    </source>
</evidence>
<evidence type="ECO:0007744" key="19">
    <source>
        <dbReference type="PDB" id="5AMO"/>
    </source>
</evidence>
<evidence type="ECO:0007829" key="20">
    <source>
        <dbReference type="PDB" id="5AMO"/>
    </source>
</evidence>
<evidence type="ECO:0007829" key="21">
    <source>
        <dbReference type="PDB" id="6QM3"/>
    </source>
</evidence>
<organism>
    <name type="scientific">Mus musculus</name>
    <name type="common">Mouse</name>
    <dbReference type="NCBI Taxonomy" id="10090"/>
    <lineage>
        <taxon>Eukaryota</taxon>
        <taxon>Metazoa</taxon>
        <taxon>Chordata</taxon>
        <taxon>Craniata</taxon>
        <taxon>Vertebrata</taxon>
        <taxon>Euteleostomi</taxon>
        <taxon>Mammalia</taxon>
        <taxon>Eutheria</taxon>
        <taxon>Euarchontoglires</taxon>
        <taxon>Glires</taxon>
        <taxon>Rodentia</taxon>
        <taxon>Myomorpha</taxon>
        <taxon>Muroidea</taxon>
        <taxon>Muridae</taxon>
        <taxon>Murinae</taxon>
        <taxon>Mus</taxon>
        <taxon>Mus</taxon>
    </lineage>
</organism>
<feature type="signal peptide" evidence="3">
    <location>
        <begin position="1"/>
        <end position="16"/>
    </location>
</feature>
<feature type="chain" id="PRO_0000020075" description="Noelin">
    <location>
        <begin position="17"/>
        <end position="485"/>
    </location>
</feature>
<feature type="domain" description="Olfactomedin-like" evidence="4">
    <location>
        <begin position="226"/>
        <end position="478"/>
    </location>
</feature>
<feature type="coiled-coil region" evidence="3 18">
    <location>
        <begin position="87"/>
        <end position="227"/>
    </location>
</feature>
<feature type="short sequence motif" description="Endoplasmic reticulum retention signal" evidence="18">
    <location>
        <begin position="482"/>
        <end position="485"/>
    </location>
</feature>
<feature type="glycosylation site" description="N-linked (GlcNAc...) asparagine" evidence="3">
    <location>
        <position position="33"/>
    </location>
</feature>
<feature type="glycosylation site" description="N-linked (GlcNAc...) asparagine" evidence="3">
    <location>
        <position position="103"/>
    </location>
</feature>
<feature type="glycosylation site" description="N-linked (GlcNAc...) asparagine" evidence="3">
    <location>
        <position position="187"/>
    </location>
</feature>
<feature type="glycosylation site" description="N-linked (GlcNAc...) asparagine" evidence="3 18">
    <location>
        <position position="288"/>
    </location>
</feature>
<feature type="glycosylation site" description="N-linked (GlcNAc...) asparagine" evidence="3 9 19">
    <location>
        <position position="307"/>
    </location>
</feature>
<feature type="glycosylation site" description="N-linked (GlcNAc...) asparagine" evidence="3 9 19">
    <location>
        <position position="394"/>
    </location>
</feature>
<feature type="glycosylation site" description="N-linked (GlcNAc...) asparagine" evidence="3 18">
    <location>
        <position position="431"/>
    </location>
</feature>
<feature type="glycosylation site" description="N-linked (GlcNAc...) asparagine" evidence="3 9 19">
    <location>
        <position position="473"/>
    </location>
</feature>
<feature type="disulfide bond" description="Interchain" evidence="9 19">
    <location>
        <position position="221"/>
    </location>
</feature>
<feature type="disulfide bond" evidence="4 9 19">
    <location>
        <begin position="227"/>
        <end position="409"/>
    </location>
</feature>
<feature type="splice variant" id="VSP_003762" description="In isoform 3 and isoform 4." evidence="12 15">
    <original>MSVPLLKIGVVLSTMAMITNWMSQTLPSLVGLNTTRLSAASGGTLDRSTG</original>
    <variation>MQPARKLLSLLVLLVMGTELTQ</variation>
    <location>
        <begin position="1"/>
        <end position="50"/>
    </location>
</feature>
<feature type="splice variant" id="VSP_003763" description="In isoform 2 and isoform 4." evidence="12">
    <original>A</original>
    <variation>G</variation>
    <location>
        <position position="153"/>
    </location>
</feature>
<feature type="splice variant" id="VSP_003764" description="In isoform 2 and isoform 4." evidence="12">
    <location>
        <begin position="154"/>
        <end position="485"/>
    </location>
</feature>
<feature type="mutagenesis site" description="Abolishes retention in the endoplasmic reticulum so that the protein is secreted." evidence="9">
    <location>
        <begin position="479"/>
        <end position="485"/>
    </location>
</feature>
<feature type="sequence conflict" description="In Ref. 2; AAB84058." evidence="16" ref="2">
    <original>S</original>
    <variation>M</variation>
    <location>
        <position position="69"/>
    </location>
</feature>
<feature type="sequence conflict" description="In Ref. 2; AAB84058." evidence="16" ref="2">
    <original>A</original>
    <variation>M</variation>
    <location>
        <position position="329"/>
    </location>
</feature>
<feature type="sequence conflict" description="In Ref. 2; AAB84058." evidence="16" ref="2">
    <original>Q</original>
    <variation>R</variation>
    <location>
        <position position="429"/>
    </location>
</feature>
<feature type="helix" evidence="21">
    <location>
        <begin position="213"/>
        <end position="225"/>
    </location>
</feature>
<feature type="strand" evidence="21">
    <location>
        <begin position="230"/>
        <end position="233"/>
    </location>
</feature>
<feature type="strand" evidence="21">
    <location>
        <begin position="237"/>
        <end position="241"/>
    </location>
</feature>
<feature type="strand" evidence="21">
    <location>
        <begin position="245"/>
        <end position="251"/>
    </location>
</feature>
<feature type="strand" evidence="21">
    <location>
        <begin position="262"/>
        <end position="266"/>
    </location>
</feature>
<feature type="strand" evidence="21">
    <location>
        <begin position="268"/>
        <end position="270"/>
    </location>
</feature>
<feature type="strand" evidence="21">
    <location>
        <begin position="273"/>
        <end position="278"/>
    </location>
</feature>
<feature type="helix" evidence="21">
    <location>
        <begin position="280"/>
        <end position="285"/>
    </location>
</feature>
<feature type="strand" evidence="21">
    <location>
        <begin position="290"/>
        <end position="293"/>
    </location>
</feature>
<feature type="strand" evidence="20">
    <location>
        <begin position="298"/>
        <end position="301"/>
    </location>
</feature>
<feature type="strand" evidence="21">
    <location>
        <begin position="304"/>
        <end position="306"/>
    </location>
</feature>
<feature type="strand" evidence="21">
    <location>
        <begin position="309"/>
        <end position="314"/>
    </location>
</feature>
<feature type="strand" evidence="21">
    <location>
        <begin position="317"/>
        <end position="324"/>
    </location>
</feature>
<feature type="turn" evidence="21">
    <location>
        <begin position="325"/>
        <end position="328"/>
    </location>
</feature>
<feature type="strand" evidence="21">
    <location>
        <begin position="329"/>
        <end position="335"/>
    </location>
</feature>
<feature type="strand" evidence="21">
    <location>
        <begin position="342"/>
        <end position="345"/>
    </location>
</feature>
<feature type="strand" evidence="21">
    <location>
        <begin position="356"/>
        <end position="360"/>
    </location>
</feature>
<feature type="strand" evidence="21">
    <location>
        <begin position="363"/>
        <end position="370"/>
    </location>
</feature>
<feature type="helix" evidence="21">
    <location>
        <begin position="371"/>
        <end position="373"/>
    </location>
</feature>
<feature type="strand" evidence="21">
    <location>
        <begin position="376"/>
        <end position="382"/>
    </location>
</feature>
<feature type="turn" evidence="21">
    <location>
        <begin position="384"/>
        <end position="386"/>
    </location>
</feature>
<feature type="strand" evidence="21">
    <location>
        <begin position="389"/>
        <end position="398"/>
    </location>
</feature>
<feature type="helix" evidence="21">
    <location>
        <begin position="399"/>
        <end position="401"/>
    </location>
</feature>
<feature type="strand" evidence="21">
    <location>
        <begin position="405"/>
        <end position="408"/>
    </location>
</feature>
<feature type="strand" evidence="21">
    <location>
        <begin position="411"/>
        <end position="416"/>
    </location>
</feature>
<feature type="strand" evidence="21">
    <location>
        <begin position="418"/>
        <end position="421"/>
    </location>
</feature>
<feature type="strand" evidence="21">
    <location>
        <begin position="423"/>
        <end position="429"/>
    </location>
</feature>
<feature type="turn" evidence="21">
    <location>
        <begin position="430"/>
        <end position="433"/>
    </location>
</feature>
<feature type="strand" evidence="21">
    <location>
        <begin position="434"/>
        <end position="441"/>
    </location>
</feature>
<feature type="strand" evidence="21">
    <location>
        <begin position="447"/>
        <end position="455"/>
    </location>
</feature>
<feature type="turn" evidence="21">
    <location>
        <begin position="456"/>
        <end position="459"/>
    </location>
</feature>
<feature type="strand" evidence="21">
    <location>
        <begin position="460"/>
        <end position="476"/>
    </location>
</feature>
<protein>
    <recommendedName>
        <fullName>Noelin</fullName>
    </recommendedName>
    <alternativeName>
        <fullName>Neuronal olfactomedin-related ER localized protein</fullName>
    </alternativeName>
    <alternativeName>
        <fullName evidence="13">Olfactomedin-1</fullName>
    </alternativeName>
    <alternativeName>
        <fullName evidence="14">Pancortin</fullName>
    </alternativeName>
</protein>